<organism>
    <name type="scientific">Salmonella phage P22</name>
    <name type="common">Bacteriophage P22</name>
    <dbReference type="NCBI Taxonomy" id="10754"/>
    <lineage>
        <taxon>Viruses</taxon>
        <taxon>Duplodnaviria</taxon>
        <taxon>Heunggongvirae</taxon>
        <taxon>Uroviricota</taxon>
        <taxon>Caudoviricetes</taxon>
        <taxon>Lederbergvirus</taxon>
    </lineage>
</organism>
<protein>
    <recommendedName>
        <fullName>Tail hub protein gp10</fullName>
    </recommendedName>
</protein>
<sequence length="472" mass="52457">MPIQQLPMMKGMGKDFKNADYIDYLPVNMLATPKEILNSSGYLRSFPGITKRYDMNGVSRGVEYNTAQNAVYRVCGGKLYKGESEVGDVAGSGRVSMAHGRTSQAVGVNGQLVEYRYDGTVKTVSNWPADSGFTQYELGSVRDITRLRGRYAWSKDGTDSWFITDLEDESHPDRYSAQYRAESQPDGIIGIGTWRDFIVCFGSSTIEYFSLTGATTAGAALYVAQPSLMVQKGIAGTYCKTPFADSYAFISHPATGAPSVYIIGSGQASPIATASIEKIIRSYTAEEMATGVMETLRFDSHELLIIHLPRHVLVYDASSSQNGPQWCVLKTGLYDDVYRGVDFMYEGNQITCGDKSEAVVGQLQFDISSQYDKQQEHLLFTPLFKADNARCFDLEVESSTGVAQYADRLFLSATTDGINYGREQMIEQNEPFVYDKRVLWKRVGRIRRLIGFKLRVITKSPVTLSGCQIRLE</sequence>
<keyword id="KW-0002">3D-structure</keyword>
<keyword id="KW-0426">Late protein</keyword>
<keyword id="KW-1185">Reference proteome</keyword>
<keyword id="KW-0946">Virion</keyword>
<reference key="1">
    <citation type="journal article" date="1993" name="Nucleic Acids Res.">
        <title>Nucleotide sequence of Salmonella bacteriophage P22 head completion genes 10 and 26.</title>
        <authorList>
            <person name="Casjens S.R."/>
            <person name="Sampson L."/>
        </authorList>
    </citation>
    <scope>NUCLEOTIDE SEQUENCE [GENOMIC DNA]</scope>
</reference>
<reference key="2">
    <citation type="journal article" date="2000" name="J. Bacteriol.">
        <title>Sequence of the genome of Salmonella bacteriophage P22.</title>
        <authorList>
            <person name="Vander Byl C.S."/>
            <person name="Kropinski A.M.B."/>
        </authorList>
    </citation>
    <scope>NUCLEOTIDE SEQUENCE [LARGE SCALE GENOMIC DNA]</scope>
</reference>
<reference key="3">
    <citation type="journal article" date="2003" name="J. Bacteriol.">
        <title>Corrected sequence of the bacteriophage P22 genome.</title>
        <authorList>
            <person name="Pedulla M.L."/>
            <person name="Ford M.E."/>
            <person name="Karthikeyan T."/>
            <person name="Houtz J.M."/>
            <person name="Hendrix R.W."/>
            <person name="Hatfull G.F."/>
            <person name="Poteete A.R."/>
            <person name="Gilcrease E.B."/>
            <person name="Winn-Stapley D.A."/>
            <person name="Casjens S.R."/>
        </authorList>
    </citation>
    <scope>NUCLEOTIDE SEQUENCE [LARGE SCALE GENOMIC DNA]</scope>
</reference>
<reference key="4">
    <citation type="journal article" date="1991" name="Virology">
        <title>Nucleotide sequence of the bacteriophage P22 genes required for DNA packaging.</title>
        <authorList>
            <person name="Eppler K."/>
            <person name="Wyckoff E."/>
            <person name="Goates J."/>
            <person name="Parr R."/>
            <person name="Casjens S."/>
        </authorList>
    </citation>
    <scope>NUCLEOTIDE SEQUENCE [GENOMIC DNA] OF 1-126</scope>
</reference>
<reference evidence="3 4 5" key="5">
    <citation type="journal article" date="2023" name="J. Mol. Biol.">
        <title>Molecular Architecture of Salmonella Typhimurium Virus P22 Genome Ejection Machinery.</title>
        <authorList>
            <person name="Iglesias S.M."/>
            <person name="Lokareddy R.K."/>
            <person name="Yang R."/>
            <person name="Li F."/>
            <person name="Yeggoni D.P."/>
            <person name="David Hou C.F."/>
            <person name="Leroux M.N."/>
            <person name="Cortines J.R."/>
            <person name="Leavitt J.C."/>
            <person name="Bird M."/>
            <person name="Casjens S.R."/>
            <person name="White S."/>
            <person name="Teschke C.M."/>
            <person name="Cingolani G."/>
        </authorList>
    </citation>
    <scope>STRUCTURE BY ELECTRON MICROSCOPY (2.80 ANGSTROMS)</scope>
    <scope>FUNCTION</scope>
    <scope>SUBUNIT</scope>
    <scope>INTERACTION WITH THE TAIL NEEDLE PROTEIN GP26</scope>
    <scope>INTERACTION WITH THE HEAD-TO-TAIL ADAPTER PROTEIN GP4</scope>
    <scope>INTERACTION WITH THE TAIL SPIKE PROTEIN GP9</scope>
    <scope>SUBCELLULAR LOCATION</scope>
</reference>
<accession>P26749</accession>
<accession>Q7PCI2</accession>
<organismHost>
    <name type="scientific">Salmonella typhimurium</name>
    <dbReference type="NCBI Taxonomy" id="90371"/>
</organismHost>
<dbReference type="EMBL" id="L14810">
    <property type="protein sequence ID" value="AAA32270.1"/>
    <property type="molecule type" value="Genomic_DNA"/>
</dbReference>
<dbReference type="EMBL" id="AF217253">
    <property type="protein sequence ID" value="AAF75050.1"/>
    <property type="molecule type" value="Genomic_DNA"/>
</dbReference>
<dbReference type="EMBL" id="M59749">
    <property type="protein sequence ID" value="AAA72966.1"/>
    <property type="status" value="ALT_TERM"/>
    <property type="molecule type" value="Genomic_DNA"/>
</dbReference>
<dbReference type="EMBL" id="BK000583">
    <property type="protein sequence ID" value="DAA00990.1"/>
    <property type="molecule type" value="Genomic_DNA"/>
</dbReference>
<dbReference type="PIR" id="S34955">
    <property type="entry name" value="S34955"/>
</dbReference>
<dbReference type="RefSeq" id="NP_059633.1">
    <property type="nucleotide sequence ID" value="NC_002371.2"/>
</dbReference>
<dbReference type="PDB" id="8EAP">
    <property type="method" value="EM"/>
    <property type="resolution" value="3.30 A"/>
    <property type="chains" value="D/E/F/G/H/I=2-472"/>
</dbReference>
<dbReference type="PDB" id="8EB7">
    <property type="method" value="EM"/>
    <property type="resolution" value="3.80 A"/>
    <property type="chains" value="R/S/T/U/V/W=2-472"/>
</dbReference>
<dbReference type="PDB" id="8TVR">
    <property type="method" value="EM"/>
    <property type="resolution" value="2.80 A"/>
    <property type="chains" value="G/K/O/S/T/Y=1-472"/>
</dbReference>
<dbReference type="PDB" id="8U10">
    <property type="method" value="EM"/>
    <property type="resolution" value="3.20 A"/>
    <property type="chains" value="1/2/3/4/5/6=1-472"/>
</dbReference>
<dbReference type="PDB" id="8U11">
    <property type="method" value="EM"/>
    <property type="resolution" value="3.10 A"/>
    <property type="chains" value="1/2/3/4/5/6=1-472"/>
</dbReference>
<dbReference type="PDBsum" id="8EAP"/>
<dbReference type="PDBsum" id="8EB7"/>
<dbReference type="PDBsum" id="8TVR"/>
<dbReference type="PDBsum" id="8U10"/>
<dbReference type="PDBsum" id="8U11"/>
<dbReference type="EMDB" id="EMD-41649"/>
<dbReference type="EMDB" id="EMD-41791"/>
<dbReference type="EMDB" id="EMD-41792"/>
<dbReference type="SMR" id="P26749"/>
<dbReference type="GeneID" id="1262840"/>
<dbReference type="KEGG" id="vg:1262840"/>
<dbReference type="OrthoDB" id="1793at10239"/>
<dbReference type="Proteomes" id="UP000001795">
    <property type="component" value="Segment"/>
</dbReference>
<dbReference type="Proteomes" id="UP000007960">
    <property type="component" value="Segment"/>
</dbReference>
<dbReference type="InterPro" id="IPR021098">
    <property type="entry name" value="Phage_P22_Gp10"/>
</dbReference>
<dbReference type="Pfam" id="PF11134">
    <property type="entry name" value="Phage_stabilise"/>
    <property type="match status" value="1"/>
</dbReference>
<comment type="function">
    <text evidence="1">Acts as a tail hub by assembling onto the head-to-tail adapter protein gp4, generating a channel that is sealed by the tail needle protein gp26 (PubMed:37952769). Together with gp4 and gp26, gp10 is required for stabilization of the condensed DNA within the capsid; perhaps by plugging the hole through which the DNA enters.</text>
</comment>
<comment type="subunit">
    <text evidence="1">Monomer (in solution) (PubMed:37952769). Hexamer; assembles as a hexamer onto the dodecamer formed by the head-to-tail adapter gp4 (PubMed:37952769). Interacts with the head-to-tail adapter protein gp4; each gp10 monomer contacts 2 head-to-tail adapter protein gp4 (PubMed:37952769). Interacts with the tail needle protein gp26 (PubMed:37952769). Interacts with the tail spike protein gp9; binds six tail spike trimers (PubMed:37952769).</text>
</comment>
<comment type="subcellular location">
    <subcellularLocation>
        <location evidence="1">Virion</location>
    </subcellularLocation>
</comment>
<evidence type="ECO:0000269" key="1">
    <source>
    </source>
</evidence>
<evidence type="ECO:0000305" key="2"/>
<evidence type="ECO:0007744" key="3">
    <source>
        <dbReference type="PDB" id="8TVR"/>
    </source>
</evidence>
<evidence type="ECO:0007744" key="4">
    <source>
        <dbReference type="PDB" id="8U10"/>
    </source>
</evidence>
<evidence type="ECO:0007744" key="5">
    <source>
        <dbReference type="PDB" id="8U11"/>
    </source>
</evidence>
<evidence type="ECO:0007829" key="6">
    <source>
        <dbReference type="PDB" id="8TVR"/>
    </source>
</evidence>
<name>HUB10_BPP22</name>
<proteinExistence type="evidence at protein level"/>
<gene>
    <name type="primary">10</name>
</gene>
<feature type="chain" id="PRO_0000077760" description="Tail hub protein gp10">
    <location>
        <begin position="1"/>
        <end position="472"/>
    </location>
</feature>
<feature type="sequence conflict" description="In Ref. 1; AAA32270." evidence="2" ref="1">
    <original>G</original>
    <variation>S</variation>
    <location>
        <position position="233"/>
    </location>
</feature>
<feature type="strand" evidence="6">
    <location>
        <begin position="3"/>
        <end position="5"/>
    </location>
</feature>
<feature type="strand" evidence="6">
    <location>
        <begin position="13"/>
        <end position="15"/>
    </location>
</feature>
<feature type="turn" evidence="6">
    <location>
        <begin position="16"/>
        <end position="19"/>
    </location>
</feature>
<feature type="strand" evidence="6">
    <location>
        <begin position="20"/>
        <end position="22"/>
    </location>
</feature>
<feature type="strand" evidence="6">
    <location>
        <begin position="27"/>
        <end position="32"/>
    </location>
</feature>
<feature type="strand" evidence="6">
    <location>
        <begin position="37"/>
        <end position="40"/>
    </location>
</feature>
<feature type="strand" evidence="6">
    <location>
        <begin position="42"/>
        <end position="45"/>
    </location>
</feature>
<feature type="strand" evidence="6">
    <location>
        <begin position="51"/>
        <end position="54"/>
    </location>
</feature>
<feature type="strand" evidence="6">
    <location>
        <begin position="56"/>
        <end position="65"/>
    </location>
</feature>
<feature type="turn" evidence="6">
    <location>
        <begin position="66"/>
        <end position="69"/>
    </location>
</feature>
<feature type="strand" evidence="6">
    <location>
        <begin position="70"/>
        <end position="75"/>
    </location>
</feature>
<feature type="strand" evidence="6">
    <location>
        <begin position="78"/>
        <end position="81"/>
    </location>
</feature>
<feature type="strand" evidence="6">
    <location>
        <begin position="84"/>
        <end position="88"/>
    </location>
</feature>
<feature type="strand" evidence="6">
    <location>
        <begin position="96"/>
        <end position="99"/>
    </location>
</feature>
<feature type="strand" evidence="6">
    <location>
        <begin position="101"/>
        <end position="108"/>
    </location>
</feature>
<feature type="strand" evidence="6">
    <location>
        <begin position="111"/>
        <end position="116"/>
    </location>
</feature>
<feature type="strand" evidence="6">
    <location>
        <begin position="121"/>
        <end position="123"/>
    </location>
</feature>
<feature type="strand" evidence="6">
    <location>
        <begin position="131"/>
        <end position="133"/>
    </location>
</feature>
<feature type="strand" evidence="6">
    <location>
        <begin position="141"/>
        <end position="147"/>
    </location>
</feature>
<feature type="strand" evidence="6">
    <location>
        <begin position="150"/>
        <end position="155"/>
    </location>
</feature>
<feature type="strand" evidence="6">
    <location>
        <begin position="158"/>
        <end position="164"/>
    </location>
</feature>
<feature type="strand" evidence="6">
    <location>
        <begin position="178"/>
        <end position="180"/>
    </location>
</feature>
<feature type="strand" evidence="6">
    <location>
        <begin position="183"/>
        <end position="186"/>
    </location>
</feature>
<feature type="strand" evidence="6">
    <location>
        <begin position="190"/>
        <end position="201"/>
    </location>
</feature>
<feature type="strand" evidence="6">
    <location>
        <begin position="206"/>
        <end position="211"/>
    </location>
</feature>
<feature type="strand" evidence="6">
    <location>
        <begin position="221"/>
        <end position="224"/>
    </location>
</feature>
<feature type="helix" evidence="6">
    <location>
        <begin position="226"/>
        <end position="228"/>
    </location>
</feature>
<feature type="strand" evidence="6">
    <location>
        <begin position="239"/>
        <end position="242"/>
    </location>
</feature>
<feature type="strand" evidence="6">
    <location>
        <begin position="244"/>
        <end position="250"/>
    </location>
</feature>
<feature type="helix" evidence="6">
    <location>
        <begin position="253"/>
        <end position="255"/>
    </location>
</feature>
<feature type="strand" evidence="6">
    <location>
        <begin position="260"/>
        <end position="263"/>
    </location>
</feature>
<feature type="strand" evidence="6">
    <location>
        <begin position="265"/>
        <end position="270"/>
    </location>
</feature>
<feature type="helix" evidence="6">
    <location>
        <begin position="274"/>
        <end position="281"/>
    </location>
</feature>
<feature type="turn" evidence="6">
    <location>
        <begin position="286"/>
        <end position="290"/>
    </location>
</feature>
<feature type="strand" evidence="6">
    <location>
        <begin position="292"/>
        <end position="298"/>
    </location>
</feature>
<feature type="strand" evidence="6">
    <location>
        <begin position="301"/>
        <end position="307"/>
    </location>
</feature>
<feature type="strand" evidence="6">
    <location>
        <begin position="312"/>
        <end position="316"/>
    </location>
</feature>
<feature type="helix" evidence="6">
    <location>
        <begin position="317"/>
        <end position="319"/>
    </location>
</feature>
<feature type="strand" evidence="6">
    <location>
        <begin position="325"/>
        <end position="331"/>
    </location>
</feature>
<feature type="turn" evidence="6">
    <location>
        <begin position="332"/>
        <end position="335"/>
    </location>
</feature>
<feature type="strand" evidence="6">
    <location>
        <begin position="340"/>
        <end position="346"/>
    </location>
</feature>
<feature type="strand" evidence="6">
    <location>
        <begin position="349"/>
        <end position="361"/>
    </location>
</feature>
<feature type="strand" evidence="6">
    <location>
        <begin position="364"/>
        <end position="366"/>
    </location>
</feature>
<feature type="strand" evidence="6">
    <location>
        <begin position="370"/>
        <end position="372"/>
    </location>
</feature>
<feature type="strand" evidence="6">
    <location>
        <begin position="375"/>
        <end position="378"/>
    </location>
</feature>
<feature type="strand" evidence="6">
    <location>
        <begin position="392"/>
        <end position="398"/>
    </location>
</feature>
<feature type="strand" evidence="6">
    <location>
        <begin position="408"/>
        <end position="411"/>
    </location>
</feature>
<feature type="strand" evidence="6">
    <location>
        <begin position="413"/>
        <end position="418"/>
    </location>
</feature>
<feature type="strand" evidence="6">
    <location>
        <begin position="424"/>
        <end position="427"/>
    </location>
</feature>
<feature type="strand" evidence="6">
    <location>
        <begin position="447"/>
        <end position="452"/>
    </location>
</feature>
<feature type="strand" evidence="6">
    <location>
        <begin position="455"/>
        <end position="460"/>
    </location>
</feature>
<feature type="strand" evidence="6">
    <location>
        <begin position="463"/>
        <end position="470"/>
    </location>
</feature>